<comment type="function">
    <text evidence="1">Binds the 23S rRNA.</text>
</comment>
<comment type="cofactor">
    <cofactor evidence="1">
        <name>Zn(2+)</name>
        <dbReference type="ChEBI" id="CHEBI:29105"/>
    </cofactor>
    <text evidence="1">Binds 1 zinc ion per subunit.</text>
</comment>
<comment type="subunit">
    <text evidence="1">Part of the 50S ribosomal subunit.</text>
</comment>
<comment type="similarity">
    <text evidence="1">Belongs to the bacterial ribosomal protein bL31 family. Type A subfamily.</text>
</comment>
<accession>A7FQF8</accession>
<feature type="chain" id="PRO_1000126588" description="Large ribosomal subunit protein bL31">
    <location>
        <begin position="1"/>
        <end position="72"/>
    </location>
</feature>
<feature type="binding site" evidence="1">
    <location>
        <position position="17"/>
    </location>
    <ligand>
        <name>Zn(2+)</name>
        <dbReference type="ChEBI" id="CHEBI:29105"/>
    </ligand>
</feature>
<feature type="binding site" evidence="1">
    <location>
        <position position="19"/>
    </location>
    <ligand>
        <name>Zn(2+)</name>
        <dbReference type="ChEBI" id="CHEBI:29105"/>
    </ligand>
</feature>
<feature type="binding site" evidence="1">
    <location>
        <position position="37"/>
    </location>
    <ligand>
        <name>Zn(2+)</name>
        <dbReference type="ChEBI" id="CHEBI:29105"/>
    </ligand>
</feature>
<feature type="binding site" evidence="1">
    <location>
        <position position="40"/>
    </location>
    <ligand>
        <name>Zn(2+)</name>
        <dbReference type="ChEBI" id="CHEBI:29105"/>
    </ligand>
</feature>
<gene>
    <name evidence="1" type="primary">rpmE</name>
    <name type="ordered locus">CLB_0171</name>
</gene>
<name>RL31_CLOB1</name>
<evidence type="ECO:0000255" key="1">
    <source>
        <dbReference type="HAMAP-Rule" id="MF_00501"/>
    </source>
</evidence>
<evidence type="ECO:0000305" key="2"/>
<reference key="1">
    <citation type="journal article" date="2007" name="PLoS ONE">
        <title>Analysis of the neurotoxin complex genes in Clostridium botulinum A1-A4 and B1 strains: BoNT/A3, /Ba4 and /B1 clusters are located within plasmids.</title>
        <authorList>
            <person name="Smith T.J."/>
            <person name="Hill K.K."/>
            <person name="Foley B.T."/>
            <person name="Detter J.C."/>
            <person name="Munk A.C."/>
            <person name="Bruce D.C."/>
            <person name="Doggett N.A."/>
            <person name="Smith L.A."/>
            <person name="Marks J.D."/>
            <person name="Xie G."/>
            <person name="Brettin T.S."/>
        </authorList>
    </citation>
    <scope>NUCLEOTIDE SEQUENCE [LARGE SCALE GENOMIC DNA]</scope>
    <source>
        <strain>ATCC 19397 / Type A</strain>
    </source>
</reference>
<dbReference type="EMBL" id="CP000726">
    <property type="protein sequence ID" value="ABS34189.1"/>
    <property type="molecule type" value="Genomic_DNA"/>
</dbReference>
<dbReference type="RefSeq" id="WP_003355803.1">
    <property type="nucleotide sequence ID" value="NC_009697.1"/>
</dbReference>
<dbReference type="GeneID" id="5184390"/>
<dbReference type="KEGG" id="cba:CLB_0171"/>
<dbReference type="HOGENOM" id="CLU_114306_4_3_9"/>
<dbReference type="GO" id="GO:1990904">
    <property type="term" value="C:ribonucleoprotein complex"/>
    <property type="evidence" value="ECO:0007669"/>
    <property type="project" value="UniProtKB-KW"/>
</dbReference>
<dbReference type="GO" id="GO:0005840">
    <property type="term" value="C:ribosome"/>
    <property type="evidence" value="ECO:0007669"/>
    <property type="project" value="UniProtKB-KW"/>
</dbReference>
<dbReference type="GO" id="GO:0046872">
    <property type="term" value="F:metal ion binding"/>
    <property type="evidence" value="ECO:0007669"/>
    <property type="project" value="UniProtKB-KW"/>
</dbReference>
<dbReference type="GO" id="GO:0019843">
    <property type="term" value="F:rRNA binding"/>
    <property type="evidence" value="ECO:0007669"/>
    <property type="project" value="UniProtKB-KW"/>
</dbReference>
<dbReference type="GO" id="GO:0003735">
    <property type="term" value="F:structural constituent of ribosome"/>
    <property type="evidence" value="ECO:0007669"/>
    <property type="project" value="InterPro"/>
</dbReference>
<dbReference type="GO" id="GO:0006412">
    <property type="term" value="P:translation"/>
    <property type="evidence" value="ECO:0007669"/>
    <property type="project" value="UniProtKB-UniRule"/>
</dbReference>
<dbReference type="Gene3D" id="4.10.830.30">
    <property type="entry name" value="Ribosomal protein L31"/>
    <property type="match status" value="1"/>
</dbReference>
<dbReference type="HAMAP" id="MF_00501">
    <property type="entry name" value="Ribosomal_bL31_1"/>
    <property type="match status" value="1"/>
</dbReference>
<dbReference type="InterPro" id="IPR034704">
    <property type="entry name" value="Ribosomal_bL28/bL31-like_sf"/>
</dbReference>
<dbReference type="InterPro" id="IPR002150">
    <property type="entry name" value="Ribosomal_bL31"/>
</dbReference>
<dbReference type="InterPro" id="IPR027491">
    <property type="entry name" value="Ribosomal_bL31_A"/>
</dbReference>
<dbReference type="InterPro" id="IPR042105">
    <property type="entry name" value="Ribosomal_bL31_sf"/>
</dbReference>
<dbReference type="NCBIfam" id="TIGR00105">
    <property type="entry name" value="L31"/>
    <property type="match status" value="1"/>
</dbReference>
<dbReference type="NCBIfam" id="NF000612">
    <property type="entry name" value="PRK00019.1"/>
    <property type="match status" value="1"/>
</dbReference>
<dbReference type="NCBIfam" id="NF001809">
    <property type="entry name" value="PRK00528.1"/>
    <property type="match status" value="1"/>
</dbReference>
<dbReference type="PANTHER" id="PTHR33280">
    <property type="entry name" value="50S RIBOSOMAL PROTEIN L31, CHLOROPLASTIC"/>
    <property type="match status" value="1"/>
</dbReference>
<dbReference type="PANTHER" id="PTHR33280:SF1">
    <property type="entry name" value="LARGE RIBOSOMAL SUBUNIT PROTEIN BL31C"/>
    <property type="match status" value="1"/>
</dbReference>
<dbReference type="Pfam" id="PF01197">
    <property type="entry name" value="Ribosomal_L31"/>
    <property type="match status" value="1"/>
</dbReference>
<dbReference type="PRINTS" id="PR01249">
    <property type="entry name" value="RIBOSOMALL31"/>
</dbReference>
<dbReference type="SUPFAM" id="SSF143800">
    <property type="entry name" value="L28p-like"/>
    <property type="match status" value="1"/>
</dbReference>
<dbReference type="PROSITE" id="PS01143">
    <property type="entry name" value="RIBOSOMAL_L31"/>
    <property type="match status" value="1"/>
</dbReference>
<proteinExistence type="inferred from homology"/>
<keyword id="KW-0479">Metal-binding</keyword>
<keyword id="KW-0687">Ribonucleoprotein</keyword>
<keyword id="KW-0689">Ribosomal protein</keyword>
<keyword id="KW-0694">RNA-binding</keyword>
<keyword id="KW-0699">rRNA-binding</keyword>
<keyword id="KW-0862">Zinc</keyword>
<protein>
    <recommendedName>
        <fullName evidence="1">Large ribosomal subunit protein bL31</fullName>
    </recommendedName>
    <alternativeName>
        <fullName evidence="2">50S ribosomal protein L31</fullName>
    </alternativeName>
</protein>
<sequence length="72" mass="8107">MREGIHPEYNHDVVVKCACGNTFTTGSTNKELKVEICSKCHPFFTGKQKIVDAGGRVDKFMKKFNLSNEDVK</sequence>
<organism>
    <name type="scientific">Clostridium botulinum (strain ATCC 19397 / Type A)</name>
    <dbReference type="NCBI Taxonomy" id="441770"/>
    <lineage>
        <taxon>Bacteria</taxon>
        <taxon>Bacillati</taxon>
        <taxon>Bacillota</taxon>
        <taxon>Clostridia</taxon>
        <taxon>Eubacteriales</taxon>
        <taxon>Clostridiaceae</taxon>
        <taxon>Clostridium</taxon>
    </lineage>
</organism>